<proteinExistence type="evidence at protein level"/>
<comment type="function">
    <text evidence="4 5 6 7 8">Collaboratively with AIPP1/EDM3 and EDM2, the AAE complex regulates alternative RNA processing (e.g. alternative splicing) and epigenetic silencing (e.g. H3K9me2) of intronic heterochromatin-containing genes as well as genic heterochromatin-containing genes by promoting distal 3' polyadenylation; may associate with intronic heterochromatin and bind gene transcripts to modulate polyadenylation (PubMed:24003136, PubMed:28808009, PubMed:33438356). Required to prevent promoter DNA hypermethylation and transcriptional silencing of some transgenes (PubMed:24003136). Plays a similar role to that of the histone H3K9 demethylase JMJ25/IBM1 in preventing CHG methylation in the bodies of numerous genes. RNA-binding protein that ensures the proper expression of JMJ25/IBM1 full-length transcript by associating with an intronic heterochromatic repeat element of JMJ25/IBM1 (PubMed:23934508, PubMed:24003136, PubMed:24404182). Also modulates transposable elements (TE) expression (PubMed:28808009, PubMed:33438356). Contributes to a unique mechanism to deal with the collateral effect of silencing intronic repeat elements (PubMed:23934508, PubMed:24003136, PubMed:24404182).</text>
</comment>
<comment type="subunit">
    <text evidence="7">Component of the ASI1-AIPP1-EDM2 (AAE) RNA regulatory complex composed of at least AIPP1/EDM3, ASI1 and EDM2 and may contain CPL2, AIPP2 and AIPP3/BDT1 (PubMed:28808009). Binds directly to AIPP1/EDM3 and AIPP2 (PubMed:28808009).</text>
</comment>
<comment type="disruption phenotype">
    <text evidence="4 5 7">Developmental defects, dwarf phenotype and short siliques. DNA hypermethylation at genic regions. Impeded use of distal polyadenylation sites at intronic heterochromatin (HC)-containing genes (e.g. histone demethylase gene IBM1) resulting in a lack of functional full-length transcripts (PubMed:28808009). Abolished expression of At4g16870, a transposable element (TE) of Copia-like retrotransposon origin, associated with methylated status (PubMed:28808009).</text>
</comment>
<comment type="sequence caution" evidence="12">
    <conflict type="erroneous gene model prediction">
        <sequence resource="EMBL-CDS" id="CAB87707"/>
    </conflict>
</comment>
<reference key="1">
    <citation type="journal article" date="2000" name="Nature">
        <title>Sequence and analysis of chromosome 5 of the plant Arabidopsis thaliana.</title>
        <authorList>
            <person name="Tabata S."/>
            <person name="Kaneko T."/>
            <person name="Nakamura Y."/>
            <person name="Kotani H."/>
            <person name="Kato T."/>
            <person name="Asamizu E."/>
            <person name="Miyajima N."/>
            <person name="Sasamoto S."/>
            <person name="Kimura T."/>
            <person name="Hosouchi T."/>
            <person name="Kawashima K."/>
            <person name="Kohara M."/>
            <person name="Matsumoto M."/>
            <person name="Matsuno A."/>
            <person name="Muraki A."/>
            <person name="Nakayama S."/>
            <person name="Nakazaki N."/>
            <person name="Naruo K."/>
            <person name="Okumura S."/>
            <person name="Shinpo S."/>
            <person name="Takeuchi C."/>
            <person name="Wada T."/>
            <person name="Watanabe A."/>
            <person name="Yamada M."/>
            <person name="Yasuda M."/>
            <person name="Sato S."/>
            <person name="de la Bastide M."/>
            <person name="Huang E."/>
            <person name="Spiegel L."/>
            <person name="Gnoj L."/>
            <person name="O'Shaughnessy A."/>
            <person name="Preston R."/>
            <person name="Habermann K."/>
            <person name="Murray J."/>
            <person name="Johnson D."/>
            <person name="Rohlfing T."/>
            <person name="Nelson J."/>
            <person name="Stoneking T."/>
            <person name="Pepin K."/>
            <person name="Spieth J."/>
            <person name="Sekhon M."/>
            <person name="Armstrong J."/>
            <person name="Becker M."/>
            <person name="Belter E."/>
            <person name="Cordum H."/>
            <person name="Cordes M."/>
            <person name="Courtney L."/>
            <person name="Courtney W."/>
            <person name="Dante M."/>
            <person name="Du H."/>
            <person name="Edwards J."/>
            <person name="Fryman J."/>
            <person name="Haakensen B."/>
            <person name="Lamar E."/>
            <person name="Latreille P."/>
            <person name="Leonard S."/>
            <person name="Meyer R."/>
            <person name="Mulvaney E."/>
            <person name="Ozersky P."/>
            <person name="Riley A."/>
            <person name="Strowmatt C."/>
            <person name="Wagner-McPherson C."/>
            <person name="Wollam A."/>
            <person name="Yoakum M."/>
            <person name="Bell M."/>
            <person name="Dedhia N."/>
            <person name="Parnell L."/>
            <person name="Shah R."/>
            <person name="Rodriguez M."/>
            <person name="Hoon See L."/>
            <person name="Vil D."/>
            <person name="Baker J."/>
            <person name="Kirchoff K."/>
            <person name="Toth K."/>
            <person name="King L."/>
            <person name="Bahret A."/>
            <person name="Miller B."/>
            <person name="Marra M.A."/>
            <person name="Martienssen R."/>
            <person name="McCombie W.R."/>
            <person name="Wilson R.K."/>
            <person name="Murphy G."/>
            <person name="Bancroft I."/>
            <person name="Volckaert G."/>
            <person name="Wambutt R."/>
            <person name="Duesterhoeft A."/>
            <person name="Stiekema W."/>
            <person name="Pohl T."/>
            <person name="Entian K.-D."/>
            <person name="Terryn N."/>
            <person name="Hartley N."/>
            <person name="Bent E."/>
            <person name="Johnson S."/>
            <person name="Langham S.-A."/>
            <person name="McCullagh B."/>
            <person name="Robben J."/>
            <person name="Grymonprez B."/>
            <person name="Zimmermann W."/>
            <person name="Ramsperger U."/>
            <person name="Wedler H."/>
            <person name="Balke K."/>
            <person name="Wedler E."/>
            <person name="Peters S."/>
            <person name="van Staveren M."/>
            <person name="Dirkse W."/>
            <person name="Mooijman P."/>
            <person name="Klein Lankhorst R."/>
            <person name="Weitzenegger T."/>
            <person name="Bothe G."/>
            <person name="Rose M."/>
            <person name="Hauf J."/>
            <person name="Berneiser S."/>
            <person name="Hempel S."/>
            <person name="Feldpausch M."/>
            <person name="Lamberth S."/>
            <person name="Villarroel R."/>
            <person name="Gielen J."/>
            <person name="Ardiles W."/>
            <person name="Bents O."/>
            <person name="Lemcke K."/>
            <person name="Kolesov G."/>
            <person name="Mayer K.F.X."/>
            <person name="Rudd S."/>
            <person name="Schoof H."/>
            <person name="Schueller C."/>
            <person name="Zaccaria P."/>
            <person name="Mewes H.-W."/>
            <person name="Bevan M."/>
            <person name="Fransz P.F."/>
        </authorList>
    </citation>
    <scope>NUCLEOTIDE SEQUENCE [LARGE SCALE GENOMIC DNA]</scope>
    <source>
        <strain>cv. Columbia</strain>
    </source>
</reference>
<reference key="2">
    <citation type="journal article" date="2017" name="Plant J.">
        <title>Araport11: a complete reannotation of the Arabidopsis thaliana reference genome.</title>
        <authorList>
            <person name="Cheng C.Y."/>
            <person name="Krishnakumar V."/>
            <person name="Chan A.P."/>
            <person name="Thibaud-Nissen F."/>
            <person name="Schobel S."/>
            <person name="Town C.D."/>
        </authorList>
    </citation>
    <scope>GENOME REANNOTATION</scope>
    <source>
        <strain>cv. Columbia</strain>
    </source>
</reference>
<reference key="3">
    <citation type="journal article" date="2013" name="Nat. Commun.">
        <title>Mechanism for full-length RNA processing of Arabidopsis genes containing intragenic heterochromatin.</title>
        <authorList>
            <person name="Saze H."/>
            <person name="Kitayama J."/>
            <person name="Takashima K."/>
            <person name="Miura S."/>
            <person name="Harukawa Y."/>
            <person name="Ito T."/>
            <person name="Kakutani T."/>
        </authorList>
    </citation>
    <scope>FUNCTION</scope>
    <scope>DISRUPTION PHENOTYPE</scope>
</reference>
<reference key="4">
    <citation type="journal article" date="2013" name="Proc. Natl. Acad. Sci. U.S.A.">
        <title>RNA-binding protein regulates plant DNA methylation by controlling mRNA processing at the intronic heterochromatin-containing gene IBM1.</title>
        <authorList>
            <person name="Wang X."/>
            <person name="Duan C.-G."/>
            <person name="Tang K."/>
            <person name="Wang B."/>
            <person name="Zhang H."/>
            <person name="Lei M."/>
            <person name="Lu K."/>
            <person name="Mangrauthia S.K."/>
            <person name="Wang P."/>
            <person name="Zhu G."/>
            <person name="Zhao Y."/>
            <person name="Zhu J.-K."/>
        </authorList>
    </citation>
    <scope>FUNCTION</scope>
    <scope>DISRUPTION PHENOTYPE</scope>
</reference>
<reference key="5">
    <citation type="journal article" date="2014" name="PLoS ONE">
        <title>SHOOT GROWTH1 maintains Arabidopsis epigenomes by regulating IBM1.</title>
        <authorList>
            <person name="Coustham V."/>
            <person name="Vlad D."/>
            <person name="Deremetz A."/>
            <person name="Gy I."/>
            <person name="Cubillos F.A."/>
            <person name="Kerdaffrec E."/>
            <person name="Loudet O."/>
            <person name="Bouche N."/>
        </authorList>
    </citation>
    <scope>FUNCTION</scope>
    <scope>DISRUPTION PHENOTYPE</scope>
</reference>
<reference key="6">
    <citation type="journal article" date="2017" name="Proc. Natl. Acad. Sci. U.S.A.">
        <title>A protein complex regulates RNA processing of intronic heterochromatin-containing genes in Arabidopsis.</title>
        <authorList>
            <person name="Duan C.-G."/>
            <person name="Wang X."/>
            <person name="Zhang L."/>
            <person name="Xiong X."/>
            <person name="Zhang Z."/>
            <person name="Tang K."/>
            <person name="Pan L."/>
            <person name="Hsu C.-C."/>
            <person name="Xu H."/>
            <person name="Tao W.A."/>
            <person name="Zhang H."/>
            <person name="Zhu J.-K."/>
        </authorList>
    </citation>
    <scope>FUNCTION</scope>
    <scope>DISRUPTION PHENOTYPE</scope>
    <scope>SUBUNIT</scope>
    <scope>INTERACTION WITH AIPP1/EDM3 AND AIPP2</scope>
    <source>
        <strain>cv. Columbia</strain>
    </source>
</reference>
<reference key="7">
    <citation type="journal article" date="2021" name="J. Integr. Plant Biol.">
        <title>Genome-wide distribution and functions of the AAE complex in epigenetic regulation in Arabidopsis.</title>
        <authorList>
            <person name="Zhang Y.-Z."/>
            <person name="Lin J."/>
            <person name="Ren Z."/>
            <person name="Chen C.-X."/>
            <person name="Miki D."/>
            <person name="Xie S.-S."/>
            <person name="Zhang J."/>
            <person name="Chang Y.-N."/>
            <person name="Jiang J."/>
            <person name="Yan J."/>
            <person name="Li Q.Q."/>
            <person name="Zhu J.-K."/>
            <person name="Duan C.-G."/>
        </authorList>
    </citation>
    <scope>FUNCTION</scope>
    <source>
        <strain>cv. Columbia</strain>
    </source>
</reference>
<organism>
    <name type="scientific">Arabidopsis thaliana</name>
    <name type="common">Mouse-ear cress</name>
    <dbReference type="NCBI Taxonomy" id="3702"/>
    <lineage>
        <taxon>Eukaryota</taxon>
        <taxon>Viridiplantae</taxon>
        <taxon>Streptophyta</taxon>
        <taxon>Embryophyta</taxon>
        <taxon>Tracheophyta</taxon>
        <taxon>Spermatophyta</taxon>
        <taxon>Magnoliopsida</taxon>
        <taxon>eudicotyledons</taxon>
        <taxon>Gunneridae</taxon>
        <taxon>Pentapetalae</taxon>
        <taxon>rosids</taxon>
        <taxon>malvids</taxon>
        <taxon>Brassicales</taxon>
        <taxon>Brassicaceae</taxon>
        <taxon>Camelineae</taxon>
        <taxon>Arabidopsis</taxon>
    </lineage>
</organism>
<protein>
    <recommendedName>
        <fullName evidence="10">Protein ANTI-SILENCING 1</fullName>
    </recommendedName>
    <alternativeName>
        <fullName evidence="9">Protein INCREASE IN BONSAI METHYLATION 2</fullName>
    </alternativeName>
    <alternativeName>
        <fullName evidence="11">Protein SHOOT GROWTH 1</fullName>
    </alternativeName>
</protein>
<gene>
    <name evidence="10" type="primary">ASI1</name>
    <name evidence="9" type="synonym">IBM2</name>
    <name evidence="11" type="synonym">SG2</name>
    <name evidence="13" type="ordered locus">At5g11470</name>
    <name evidence="14" type="ORF">F15N18_60</name>
</gene>
<keyword id="KW-0156">Chromatin regulator</keyword>
<keyword id="KW-1185">Reference proteome</keyword>
<keyword id="KW-0694">RNA-binding</keyword>
<keyword id="KW-0804">Transcription</keyword>
<keyword id="KW-0805">Transcription regulation</keyword>
<evidence type="ECO:0000255" key="1">
    <source>
        <dbReference type="PROSITE-ProRule" id="PRU00176"/>
    </source>
</evidence>
<evidence type="ECO:0000255" key="2">
    <source>
        <dbReference type="PROSITE-ProRule" id="PRU00370"/>
    </source>
</evidence>
<evidence type="ECO:0000256" key="3">
    <source>
        <dbReference type="SAM" id="MobiDB-lite"/>
    </source>
</evidence>
<evidence type="ECO:0000269" key="4">
    <source>
    </source>
</evidence>
<evidence type="ECO:0000269" key="5">
    <source>
    </source>
</evidence>
<evidence type="ECO:0000269" key="6">
    <source>
    </source>
</evidence>
<evidence type="ECO:0000269" key="7">
    <source>
    </source>
</evidence>
<evidence type="ECO:0000269" key="8">
    <source>
    </source>
</evidence>
<evidence type="ECO:0000303" key="9">
    <source>
    </source>
</evidence>
<evidence type="ECO:0000303" key="10">
    <source>
    </source>
</evidence>
<evidence type="ECO:0000303" key="11">
    <source>
    </source>
</evidence>
<evidence type="ECO:0000305" key="12"/>
<evidence type="ECO:0000312" key="13">
    <source>
        <dbReference type="Araport" id="AT5G11470"/>
    </source>
</evidence>
<evidence type="ECO:0000312" key="14">
    <source>
        <dbReference type="EMBL" id="CAB87707.1"/>
    </source>
</evidence>
<feature type="chain" id="PRO_0000437259" description="Protein ANTI-SILENCING 1">
    <location>
        <begin position="1"/>
        <end position="650"/>
    </location>
</feature>
<feature type="domain" description="BAH" evidence="2">
    <location>
        <begin position="38"/>
        <end position="169"/>
    </location>
</feature>
<feature type="domain" description="RRM" evidence="1">
    <location>
        <begin position="486"/>
        <end position="569"/>
    </location>
</feature>
<feature type="region of interest" description="Disordered" evidence="3">
    <location>
        <begin position="202"/>
        <end position="223"/>
    </location>
</feature>
<feature type="region of interest" description="Disordered" evidence="3">
    <location>
        <begin position="229"/>
        <end position="248"/>
    </location>
</feature>
<feature type="region of interest" description="Disordered" evidence="3">
    <location>
        <begin position="257"/>
        <end position="359"/>
    </location>
</feature>
<feature type="region of interest" description="Disordered" evidence="3">
    <location>
        <begin position="425"/>
        <end position="448"/>
    </location>
</feature>
<feature type="compositionally biased region" description="Basic and acidic residues" evidence="3">
    <location>
        <begin position="259"/>
        <end position="270"/>
    </location>
</feature>
<feature type="compositionally biased region" description="Basic and acidic residues" evidence="3">
    <location>
        <begin position="277"/>
        <end position="287"/>
    </location>
</feature>
<feature type="compositionally biased region" description="Polar residues" evidence="3">
    <location>
        <begin position="302"/>
        <end position="315"/>
    </location>
</feature>
<feature type="compositionally biased region" description="Basic and acidic residues" evidence="3">
    <location>
        <begin position="348"/>
        <end position="358"/>
    </location>
</feature>
<feature type="compositionally biased region" description="Basic and acidic residues" evidence="3">
    <location>
        <begin position="438"/>
        <end position="448"/>
    </location>
</feature>
<accession>Q9LYE3</accession>
<accession>F4JXV7</accession>
<dbReference type="EMBL" id="AL163815">
    <property type="protein sequence ID" value="CAB87707.1"/>
    <property type="status" value="ALT_SEQ"/>
    <property type="molecule type" value="Genomic_DNA"/>
</dbReference>
<dbReference type="EMBL" id="CP002688">
    <property type="protein sequence ID" value="ANM69537.1"/>
    <property type="molecule type" value="Genomic_DNA"/>
</dbReference>
<dbReference type="PIR" id="T48506">
    <property type="entry name" value="T48506"/>
</dbReference>
<dbReference type="RefSeq" id="NP_001331207.1">
    <property type="nucleotide sequence ID" value="NM_001343194.1"/>
</dbReference>
<dbReference type="SMR" id="Q9LYE3"/>
<dbReference type="FunCoup" id="Q9LYE3">
    <property type="interactions" value="1281"/>
</dbReference>
<dbReference type="STRING" id="3702.Q9LYE3"/>
<dbReference type="PaxDb" id="3702-AT5G11470.1"/>
<dbReference type="ProteomicsDB" id="246502"/>
<dbReference type="EnsemblPlants" id="AT5G11470.2">
    <property type="protein sequence ID" value="AT5G11470.2"/>
    <property type="gene ID" value="AT5G11470"/>
</dbReference>
<dbReference type="GeneID" id="831018"/>
<dbReference type="Gramene" id="AT5G11470.2">
    <property type="protein sequence ID" value="AT5G11470.2"/>
    <property type="gene ID" value="AT5G11470"/>
</dbReference>
<dbReference type="KEGG" id="ath:AT5G11470"/>
<dbReference type="Araport" id="AT5G11470"/>
<dbReference type="TAIR" id="AT5G11470">
    <property type="gene designation" value="IBM2"/>
</dbReference>
<dbReference type="eggNOG" id="ENOG502QSH0">
    <property type="taxonomic scope" value="Eukaryota"/>
</dbReference>
<dbReference type="InParanoid" id="Q9LYE3"/>
<dbReference type="OMA" id="KIWQQNQ"/>
<dbReference type="PRO" id="PR:Q9LYE3"/>
<dbReference type="Proteomes" id="UP000006548">
    <property type="component" value="Chromosome 5"/>
</dbReference>
<dbReference type="ExpressionAtlas" id="Q9LYE3">
    <property type="expression patterns" value="baseline and differential"/>
</dbReference>
<dbReference type="GO" id="GO:0032991">
    <property type="term" value="C:protein-containing complex"/>
    <property type="evidence" value="ECO:0000353"/>
    <property type="project" value="TAIR"/>
</dbReference>
<dbReference type="GO" id="GO:0003682">
    <property type="term" value="F:chromatin binding"/>
    <property type="evidence" value="ECO:0007669"/>
    <property type="project" value="InterPro"/>
</dbReference>
<dbReference type="GO" id="GO:0003723">
    <property type="term" value="F:RNA binding"/>
    <property type="evidence" value="ECO:0000314"/>
    <property type="project" value="UniProtKB"/>
</dbReference>
<dbReference type="GO" id="GO:0040029">
    <property type="term" value="P:epigenetic regulation of gene expression"/>
    <property type="evidence" value="ECO:0000314"/>
    <property type="project" value="UniProtKB"/>
</dbReference>
<dbReference type="GO" id="GO:0080188">
    <property type="term" value="P:gene silencing by siRNA-directed DNA methylation"/>
    <property type="evidence" value="ECO:0000315"/>
    <property type="project" value="UniProtKB"/>
</dbReference>
<dbReference type="GO" id="GO:0141005">
    <property type="term" value="P:transposable element silencing by heterochromatin formation"/>
    <property type="evidence" value="ECO:0000314"/>
    <property type="project" value="UniProtKB"/>
</dbReference>
<dbReference type="CDD" id="cd04715">
    <property type="entry name" value="BAH_Orc1p_like"/>
    <property type="match status" value="1"/>
</dbReference>
<dbReference type="FunFam" id="2.30.30.490:FF:000017">
    <property type="entry name" value="Bromo-adjacent homology (BAH) domain-containing protein"/>
    <property type="match status" value="1"/>
</dbReference>
<dbReference type="Gene3D" id="2.30.30.490">
    <property type="match status" value="1"/>
</dbReference>
<dbReference type="Gene3D" id="3.30.70.330">
    <property type="match status" value="1"/>
</dbReference>
<dbReference type="InterPro" id="IPR001025">
    <property type="entry name" value="BAH_dom"/>
</dbReference>
<dbReference type="InterPro" id="IPR043151">
    <property type="entry name" value="BAH_sf"/>
</dbReference>
<dbReference type="InterPro" id="IPR012677">
    <property type="entry name" value="Nucleotide-bd_a/b_plait_sf"/>
</dbReference>
<dbReference type="InterPro" id="IPR035979">
    <property type="entry name" value="RBD_domain_sf"/>
</dbReference>
<dbReference type="InterPro" id="IPR000504">
    <property type="entry name" value="RRM_dom"/>
</dbReference>
<dbReference type="PANTHER" id="PTHR47073">
    <property type="entry name" value="PROTEIN ANTI-SILENCING 1"/>
    <property type="match status" value="1"/>
</dbReference>
<dbReference type="PANTHER" id="PTHR47073:SF2">
    <property type="entry name" value="PROTEIN ANTI-SILENCING 1"/>
    <property type="match status" value="1"/>
</dbReference>
<dbReference type="Pfam" id="PF01426">
    <property type="entry name" value="BAH"/>
    <property type="match status" value="1"/>
</dbReference>
<dbReference type="SMART" id="SM00439">
    <property type="entry name" value="BAH"/>
    <property type="match status" value="1"/>
</dbReference>
<dbReference type="SUPFAM" id="SSF54928">
    <property type="entry name" value="RNA-binding domain, RBD"/>
    <property type="match status" value="1"/>
</dbReference>
<dbReference type="PROSITE" id="PS51038">
    <property type="entry name" value="BAH"/>
    <property type="match status" value="1"/>
</dbReference>
<dbReference type="PROSITE" id="PS50102">
    <property type="entry name" value="RRM"/>
    <property type="match status" value="1"/>
</dbReference>
<sequence length="650" mass="72782">MEESVASEGLEFKWGKKKGVGGKKKDVQFYESFTYDGDEYRLYDCVLVGNASEPDSTEPFIGMIIKIWEHANKHIPKKVKLLWFFKPSEIAPYLEGVPNVLANEVFLASGEGLGLANTNQLEAIGGKCSVLCISKDKRNPQPSDEKFNSADFVFCRAFDVGSCKVVDTIDDKIAGVDVKFIFNRACSEKEATAVQNIEADVNGKSDSLKPNGPLARGASGSVRKIEDSAFESSDCKENSNGCKEEKEKGHYQLAIKKSTLAEERSNKDSGSRGNHYNGKDQESEVKKQLTKQKSMPGEERYSNSFEASGSRTIHSISKKAQENDVKKQLTKQKSMPAGERYSQESSGLDDRPLKKQKLDGSVTVRDGWDTTILQNITSDGKKDTGSFKRPRDKVTIEEVPPEKRSFVKNRDLVVSVSEGKTTKTVTEKGISKKPSFGRAEDKMSADDNERNYQVTEVCRRPDAGKSKWFRSLPWEESMREAEKKGTVVLLQNLDPTYTSDEVEDIVYSALNQQCEARMIERTSVTIPHIGEALVIFKTREVAERVIRRLDEGCLLLSSGRPLVASFAKITPPGKPSLFSGHIKLHKTQTRREMRDAVATSHSSQPNNLEFDMAMEWCLHQARHEQASESVSKRQLEEMKSLRINFKLKLP</sequence>
<name>ASI1_ARATH</name>